<name>GLV1_ARATH</name>
<organism>
    <name type="scientific">Arabidopsis thaliana</name>
    <name type="common">Mouse-ear cress</name>
    <dbReference type="NCBI Taxonomy" id="3702"/>
    <lineage>
        <taxon>Eukaryota</taxon>
        <taxon>Viridiplantae</taxon>
        <taxon>Streptophyta</taxon>
        <taxon>Embryophyta</taxon>
        <taxon>Tracheophyta</taxon>
        <taxon>Spermatophyta</taxon>
        <taxon>Magnoliopsida</taxon>
        <taxon>eudicotyledons</taxon>
        <taxon>Gunneridae</taxon>
        <taxon>Pentapetalae</taxon>
        <taxon>rosids</taxon>
        <taxon>malvids</taxon>
        <taxon>Brassicales</taxon>
        <taxon>Brassicaceae</taxon>
        <taxon>Camelineae</taxon>
        <taxon>Arabidopsis</taxon>
    </lineage>
</organism>
<feature type="signal peptide" evidence="3">
    <location>
        <begin position="1"/>
        <end position="29"/>
    </location>
</feature>
<feature type="propeptide" id="PRO_0000401449" evidence="1">
    <location>
        <begin position="30"/>
        <end position="70"/>
    </location>
</feature>
<feature type="peptide" id="PRO_0000401450" description="GLV1p">
    <location>
        <begin position="71"/>
        <end position="83"/>
    </location>
</feature>
<feature type="propeptide" id="PRO_0000401451" evidence="1">
    <location>
        <begin position="84"/>
        <end position="86"/>
    </location>
</feature>
<feature type="modified residue" description="Sulfotyrosine" evidence="6">
    <location>
        <position position="72"/>
    </location>
</feature>
<feature type="modified residue" description="Hydroxyproline" evidence="6">
    <location>
        <position position="80"/>
    </location>
</feature>
<protein>
    <recommendedName>
        <fullName evidence="11">Protein GOLVEN 1</fullName>
    </recommendedName>
    <alternativeName>
        <fullName evidence="9">CLAVATA3/ESR (CLE)-related protein CLEL6</fullName>
        <shortName evidence="9">CLE-Like protein 6</shortName>
    </alternativeName>
    <alternativeName>
        <fullName evidence="8">Root meristem growth factor 6</fullName>
        <shortName evidence="8">AtRGF6</shortName>
    </alternativeName>
    <component>
        <recommendedName>
            <fullName evidence="10">GLV1p</fullName>
        </recommendedName>
    </component>
</protein>
<dbReference type="EMBL" id="AL161544">
    <property type="status" value="NOT_ANNOTATED_CDS"/>
    <property type="molecule type" value="Genomic_DNA"/>
</dbReference>
<dbReference type="EMBL" id="CP002687">
    <property type="protein sequence ID" value="AEE83763.1"/>
    <property type="molecule type" value="Genomic_DNA"/>
</dbReference>
<dbReference type="EMBL" id="AF380632">
    <property type="protein sequence ID" value="AAK55713.1"/>
    <property type="molecule type" value="mRNA"/>
</dbReference>
<dbReference type="EMBL" id="AY054128">
    <property type="protein sequence ID" value="AAL06789.1"/>
    <property type="molecule type" value="mRNA"/>
</dbReference>
<dbReference type="EMBL" id="AY088419">
    <property type="protein sequence ID" value="AAM65956.1"/>
    <property type="molecule type" value="mRNA"/>
</dbReference>
<dbReference type="RefSeq" id="NP_567503.1">
    <property type="nucleotide sequence ID" value="NM_117750.3"/>
</dbReference>
<dbReference type="SMR" id="Q93VK8"/>
<dbReference type="STRING" id="3702.Q93VK8"/>
<dbReference type="PaxDb" id="3702-AT4G16515.1"/>
<dbReference type="EnsemblPlants" id="AT4G16515.1">
    <property type="protein sequence ID" value="AT4G16515.1"/>
    <property type="gene ID" value="AT4G16515"/>
</dbReference>
<dbReference type="GeneID" id="827350"/>
<dbReference type="Gramene" id="AT4G16515.1">
    <property type="protein sequence ID" value="AT4G16515.1"/>
    <property type="gene ID" value="AT4G16515"/>
</dbReference>
<dbReference type="KEGG" id="ath:AT4G16515"/>
<dbReference type="Araport" id="AT4G16515"/>
<dbReference type="TAIR" id="AT4G16515">
    <property type="gene designation" value="RGF6"/>
</dbReference>
<dbReference type="HOGENOM" id="CLU_2593098_0_0_1"/>
<dbReference type="InParanoid" id="Q93VK8"/>
<dbReference type="OMA" id="MYCPVKR"/>
<dbReference type="PRO" id="PR:Q93VK8"/>
<dbReference type="Proteomes" id="UP000006548">
    <property type="component" value="Chromosome 4"/>
</dbReference>
<dbReference type="ExpressionAtlas" id="Q93VK8">
    <property type="expression patterns" value="differential"/>
</dbReference>
<dbReference type="GO" id="GO:0005783">
    <property type="term" value="C:endoplasmic reticulum"/>
    <property type="evidence" value="ECO:0007669"/>
    <property type="project" value="UniProtKB-SubCell"/>
</dbReference>
<dbReference type="GO" id="GO:0005615">
    <property type="term" value="C:extracellular space"/>
    <property type="evidence" value="ECO:0000250"/>
    <property type="project" value="UniProtKB"/>
</dbReference>
<dbReference type="GO" id="GO:0008083">
    <property type="term" value="F:growth factor activity"/>
    <property type="evidence" value="ECO:0000314"/>
    <property type="project" value="UniProtKB"/>
</dbReference>
<dbReference type="GO" id="GO:0005179">
    <property type="term" value="F:hormone activity"/>
    <property type="evidence" value="ECO:0000314"/>
    <property type="project" value="UniProtKB"/>
</dbReference>
<dbReference type="GO" id="GO:0030154">
    <property type="term" value="P:cell differentiation"/>
    <property type="evidence" value="ECO:0000314"/>
    <property type="project" value="UniProtKB"/>
</dbReference>
<dbReference type="GO" id="GO:0048527">
    <property type="term" value="P:lateral root development"/>
    <property type="evidence" value="ECO:0000315"/>
    <property type="project" value="TAIR"/>
</dbReference>
<dbReference type="GO" id="GO:0009958">
    <property type="term" value="P:positive gravitropism"/>
    <property type="evidence" value="ECO:0000315"/>
    <property type="project" value="TAIR"/>
</dbReference>
<dbReference type="GO" id="GO:0008284">
    <property type="term" value="P:positive regulation of cell population proliferation"/>
    <property type="evidence" value="ECO:0000314"/>
    <property type="project" value="UniProtKB"/>
</dbReference>
<dbReference type="GO" id="GO:0009786">
    <property type="term" value="P:regulation of asymmetric cell division"/>
    <property type="evidence" value="ECO:0000314"/>
    <property type="project" value="UniProtKB"/>
</dbReference>
<dbReference type="GO" id="GO:2000012">
    <property type="term" value="P:regulation of auxin polar transport"/>
    <property type="evidence" value="ECO:0000315"/>
    <property type="project" value="TAIR"/>
</dbReference>
<dbReference type="GO" id="GO:2000023">
    <property type="term" value="P:regulation of lateral root development"/>
    <property type="evidence" value="ECO:0000314"/>
    <property type="project" value="UniProtKB"/>
</dbReference>
<dbReference type="GO" id="GO:0032880">
    <property type="term" value="P:regulation of protein localization"/>
    <property type="evidence" value="ECO:0000314"/>
    <property type="project" value="TAIR"/>
</dbReference>
<dbReference type="GO" id="GO:2000280">
    <property type="term" value="P:regulation of root development"/>
    <property type="evidence" value="ECO:0000315"/>
    <property type="project" value="UniProtKB"/>
</dbReference>
<dbReference type="GO" id="GO:0010082">
    <property type="term" value="P:regulation of root meristem growth"/>
    <property type="evidence" value="ECO:0000314"/>
    <property type="project" value="UniProtKB"/>
</dbReference>
<dbReference type="GO" id="GO:2000067">
    <property type="term" value="P:regulation of root morphogenesis"/>
    <property type="evidence" value="ECO:0000314"/>
    <property type="project" value="UniProtKB"/>
</dbReference>
<dbReference type="GO" id="GO:0009733">
    <property type="term" value="P:response to auxin"/>
    <property type="evidence" value="ECO:0000270"/>
    <property type="project" value="UniProtKB"/>
</dbReference>
<dbReference type="GO" id="GO:0022622">
    <property type="term" value="P:root system development"/>
    <property type="evidence" value="ECO:0000315"/>
    <property type="project" value="TAIR"/>
</dbReference>
<dbReference type="InterPro" id="IPR049306">
    <property type="entry name" value="GLV1-2"/>
</dbReference>
<dbReference type="Pfam" id="PF21529">
    <property type="entry name" value="GLV1-2"/>
    <property type="match status" value="1"/>
</dbReference>
<keyword id="KW-0221">Differentiation</keyword>
<keyword id="KW-0256">Endoplasmic reticulum</keyword>
<keyword id="KW-0339">Growth factor</keyword>
<keyword id="KW-0379">Hydroxylation</keyword>
<keyword id="KW-1185">Reference proteome</keyword>
<keyword id="KW-0964">Secreted</keyword>
<keyword id="KW-0732">Signal</keyword>
<keyword id="KW-0765">Sulfation</keyword>
<reference key="1">
    <citation type="journal article" date="1999" name="Nature">
        <title>Sequence and analysis of chromosome 4 of the plant Arabidopsis thaliana.</title>
        <authorList>
            <person name="Mayer K.F.X."/>
            <person name="Schueller C."/>
            <person name="Wambutt R."/>
            <person name="Murphy G."/>
            <person name="Volckaert G."/>
            <person name="Pohl T."/>
            <person name="Duesterhoeft A."/>
            <person name="Stiekema W."/>
            <person name="Entian K.-D."/>
            <person name="Terryn N."/>
            <person name="Harris B."/>
            <person name="Ansorge W."/>
            <person name="Brandt P."/>
            <person name="Grivell L.A."/>
            <person name="Rieger M."/>
            <person name="Weichselgartner M."/>
            <person name="de Simone V."/>
            <person name="Obermaier B."/>
            <person name="Mache R."/>
            <person name="Mueller M."/>
            <person name="Kreis M."/>
            <person name="Delseny M."/>
            <person name="Puigdomenech P."/>
            <person name="Watson M."/>
            <person name="Schmidtheini T."/>
            <person name="Reichert B."/>
            <person name="Portetelle D."/>
            <person name="Perez-Alonso M."/>
            <person name="Boutry M."/>
            <person name="Bancroft I."/>
            <person name="Vos P."/>
            <person name="Hoheisel J."/>
            <person name="Zimmermann W."/>
            <person name="Wedler H."/>
            <person name="Ridley P."/>
            <person name="Langham S.-A."/>
            <person name="McCullagh B."/>
            <person name="Bilham L."/>
            <person name="Robben J."/>
            <person name="van der Schueren J."/>
            <person name="Grymonprez B."/>
            <person name="Chuang Y.-J."/>
            <person name="Vandenbussche F."/>
            <person name="Braeken M."/>
            <person name="Weltjens I."/>
            <person name="Voet M."/>
            <person name="Bastiaens I."/>
            <person name="Aert R."/>
            <person name="Defoor E."/>
            <person name="Weitzenegger T."/>
            <person name="Bothe G."/>
            <person name="Ramsperger U."/>
            <person name="Hilbert H."/>
            <person name="Braun M."/>
            <person name="Holzer E."/>
            <person name="Brandt A."/>
            <person name="Peters S."/>
            <person name="van Staveren M."/>
            <person name="Dirkse W."/>
            <person name="Mooijman P."/>
            <person name="Klein Lankhorst R."/>
            <person name="Rose M."/>
            <person name="Hauf J."/>
            <person name="Koetter P."/>
            <person name="Berneiser S."/>
            <person name="Hempel S."/>
            <person name="Feldpausch M."/>
            <person name="Lamberth S."/>
            <person name="Van den Daele H."/>
            <person name="De Keyser A."/>
            <person name="Buysshaert C."/>
            <person name="Gielen J."/>
            <person name="Villarroel R."/>
            <person name="De Clercq R."/>
            <person name="van Montagu M."/>
            <person name="Rogers J."/>
            <person name="Cronin A."/>
            <person name="Quail M.A."/>
            <person name="Bray-Allen S."/>
            <person name="Clark L."/>
            <person name="Doggett J."/>
            <person name="Hall S."/>
            <person name="Kay M."/>
            <person name="Lennard N."/>
            <person name="McLay K."/>
            <person name="Mayes R."/>
            <person name="Pettett A."/>
            <person name="Rajandream M.A."/>
            <person name="Lyne M."/>
            <person name="Benes V."/>
            <person name="Rechmann S."/>
            <person name="Borkova D."/>
            <person name="Bloecker H."/>
            <person name="Scharfe M."/>
            <person name="Grimm M."/>
            <person name="Loehnert T.-H."/>
            <person name="Dose S."/>
            <person name="de Haan M."/>
            <person name="Maarse A.C."/>
            <person name="Schaefer M."/>
            <person name="Mueller-Auer S."/>
            <person name="Gabel C."/>
            <person name="Fuchs M."/>
            <person name="Fartmann B."/>
            <person name="Granderath K."/>
            <person name="Dauner D."/>
            <person name="Herzl A."/>
            <person name="Neumann S."/>
            <person name="Argiriou A."/>
            <person name="Vitale D."/>
            <person name="Liguori R."/>
            <person name="Piravandi E."/>
            <person name="Massenet O."/>
            <person name="Quigley F."/>
            <person name="Clabauld G."/>
            <person name="Muendlein A."/>
            <person name="Felber R."/>
            <person name="Schnabl S."/>
            <person name="Hiller R."/>
            <person name="Schmidt W."/>
            <person name="Lecharny A."/>
            <person name="Aubourg S."/>
            <person name="Chefdor F."/>
            <person name="Cooke R."/>
            <person name="Berger C."/>
            <person name="Monfort A."/>
            <person name="Casacuberta E."/>
            <person name="Gibbons T."/>
            <person name="Weber N."/>
            <person name="Vandenbol M."/>
            <person name="Bargues M."/>
            <person name="Terol J."/>
            <person name="Torres A."/>
            <person name="Perez-Perez A."/>
            <person name="Purnelle B."/>
            <person name="Bent E."/>
            <person name="Johnson S."/>
            <person name="Tacon D."/>
            <person name="Jesse T."/>
            <person name="Heijnen L."/>
            <person name="Schwarz S."/>
            <person name="Scholler P."/>
            <person name="Heber S."/>
            <person name="Francs P."/>
            <person name="Bielke C."/>
            <person name="Frishman D."/>
            <person name="Haase D."/>
            <person name="Lemcke K."/>
            <person name="Mewes H.-W."/>
            <person name="Stocker S."/>
            <person name="Zaccaria P."/>
            <person name="Bevan M."/>
            <person name="Wilson R.K."/>
            <person name="de la Bastide M."/>
            <person name="Habermann K."/>
            <person name="Parnell L."/>
            <person name="Dedhia N."/>
            <person name="Gnoj L."/>
            <person name="Schutz K."/>
            <person name="Huang E."/>
            <person name="Spiegel L."/>
            <person name="Sekhon M."/>
            <person name="Murray J."/>
            <person name="Sheet P."/>
            <person name="Cordes M."/>
            <person name="Abu-Threideh J."/>
            <person name="Stoneking T."/>
            <person name="Kalicki J."/>
            <person name="Graves T."/>
            <person name="Harmon G."/>
            <person name="Edwards J."/>
            <person name="Latreille P."/>
            <person name="Courtney L."/>
            <person name="Cloud J."/>
            <person name="Abbott A."/>
            <person name="Scott K."/>
            <person name="Johnson D."/>
            <person name="Minx P."/>
            <person name="Bentley D."/>
            <person name="Fulton B."/>
            <person name="Miller N."/>
            <person name="Greco T."/>
            <person name="Kemp K."/>
            <person name="Kramer J."/>
            <person name="Fulton L."/>
            <person name="Mardis E."/>
            <person name="Dante M."/>
            <person name="Pepin K."/>
            <person name="Hillier L.W."/>
            <person name="Nelson J."/>
            <person name="Spieth J."/>
            <person name="Ryan E."/>
            <person name="Andrews S."/>
            <person name="Geisel C."/>
            <person name="Layman D."/>
            <person name="Du H."/>
            <person name="Ali J."/>
            <person name="Berghoff A."/>
            <person name="Jones K."/>
            <person name="Drone K."/>
            <person name="Cotton M."/>
            <person name="Joshu C."/>
            <person name="Antonoiu B."/>
            <person name="Zidanic M."/>
            <person name="Strong C."/>
            <person name="Sun H."/>
            <person name="Lamar B."/>
            <person name="Yordan C."/>
            <person name="Ma P."/>
            <person name="Zhong J."/>
            <person name="Preston R."/>
            <person name="Vil D."/>
            <person name="Shekher M."/>
            <person name="Matero A."/>
            <person name="Shah R."/>
            <person name="Swaby I.K."/>
            <person name="O'Shaughnessy A."/>
            <person name="Rodriguez M."/>
            <person name="Hoffman J."/>
            <person name="Till S."/>
            <person name="Granat S."/>
            <person name="Shohdy N."/>
            <person name="Hasegawa A."/>
            <person name="Hameed A."/>
            <person name="Lodhi M."/>
            <person name="Johnson A."/>
            <person name="Chen E."/>
            <person name="Marra M.A."/>
            <person name="Martienssen R."/>
            <person name="McCombie W.R."/>
        </authorList>
    </citation>
    <scope>NUCLEOTIDE SEQUENCE [LARGE SCALE GENOMIC DNA]</scope>
    <source>
        <strain>cv. Columbia</strain>
    </source>
</reference>
<reference key="2">
    <citation type="journal article" date="2017" name="Plant J.">
        <title>Araport11: a complete reannotation of the Arabidopsis thaliana reference genome.</title>
        <authorList>
            <person name="Cheng C.Y."/>
            <person name="Krishnakumar V."/>
            <person name="Chan A.P."/>
            <person name="Thibaud-Nissen F."/>
            <person name="Schobel S."/>
            <person name="Town C.D."/>
        </authorList>
    </citation>
    <scope>GENOME REANNOTATION</scope>
    <source>
        <strain>cv. Columbia</strain>
    </source>
</reference>
<reference key="3">
    <citation type="submission" date="2002-03" db="EMBL/GenBank/DDBJ databases">
        <title>Full-length cDNA from Arabidopsis thaliana.</title>
        <authorList>
            <person name="Brover V.V."/>
            <person name="Troukhan M.E."/>
            <person name="Alexandrov N.A."/>
            <person name="Lu Y.-P."/>
            <person name="Flavell R.B."/>
            <person name="Feldmann K.A."/>
        </authorList>
    </citation>
    <scope>NUCLEOTIDE SEQUENCE [LARGE SCALE MRNA]</scope>
</reference>
<reference key="4">
    <citation type="journal article" date="2003" name="Science">
        <title>Empirical analysis of transcriptional activity in the Arabidopsis genome.</title>
        <authorList>
            <person name="Yamada K."/>
            <person name="Lim J."/>
            <person name="Dale J.M."/>
            <person name="Chen H."/>
            <person name="Shinn P."/>
            <person name="Palm C.J."/>
            <person name="Southwick A.M."/>
            <person name="Wu H.C."/>
            <person name="Kim C.J."/>
            <person name="Nguyen M."/>
            <person name="Pham P.K."/>
            <person name="Cheuk R.F."/>
            <person name="Karlin-Newmann G."/>
            <person name="Liu S.X."/>
            <person name="Lam B."/>
            <person name="Sakano H."/>
            <person name="Wu T."/>
            <person name="Yu G."/>
            <person name="Miranda M."/>
            <person name="Quach H.L."/>
            <person name="Tripp M."/>
            <person name="Chang C.H."/>
            <person name="Lee J.M."/>
            <person name="Toriumi M.J."/>
            <person name="Chan M.M."/>
            <person name="Tang C.C."/>
            <person name="Onodera C.S."/>
            <person name="Deng J.M."/>
            <person name="Akiyama K."/>
            <person name="Ansari Y."/>
            <person name="Arakawa T."/>
            <person name="Banh J."/>
            <person name="Banno F."/>
            <person name="Bowser L."/>
            <person name="Brooks S.Y."/>
            <person name="Carninci P."/>
            <person name="Chao Q."/>
            <person name="Choy N."/>
            <person name="Enju A."/>
            <person name="Goldsmith A.D."/>
            <person name="Gurjal M."/>
            <person name="Hansen N.F."/>
            <person name="Hayashizaki Y."/>
            <person name="Johnson-Hopson C."/>
            <person name="Hsuan V.W."/>
            <person name="Iida K."/>
            <person name="Karnes M."/>
            <person name="Khan S."/>
            <person name="Koesema E."/>
            <person name="Ishida J."/>
            <person name="Jiang P.X."/>
            <person name="Jones T."/>
            <person name="Kawai J."/>
            <person name="Kamiya A."/>
            <person name="Meyers C."/>
            <person name="Nakajima M."/>
            <person name="Narusaka M."/>
            <person name="Seki M."/>
            <person name="Sakurai T."/>
            <person name="Satou M."/>
            <person name="Tamse R."/>
            <person name="Vaysberg M."/>
            <person name="Wallender E.K."/>
            <person name="Wong C."/>
            <person name="Yamamura Y."/>
            <person name="Yuan S."/>
            <person name="Shinozaki K."/>
            <person name="Davis R.W."/>
            <person name="Theologis A."/>
            <person name="Ecker J.R."/>
        </authorList>
    </citation>
    <scope>NUCLEOTIDE SEQUENCE [LARGE SCALE MRNA]</scope>
    <source>
        <strain>cv. Columbia</strain>
    </source>
</reference>
<reference key="5">
    <citation type="journal article" date="2010" name="Science">
        <title>Secreted peptide signals required for maintenance of root stem cell niche in Arabidopsis.</title>
        <authorList>
            <person name="Matsuzaki Y."/>
            <person name="Ogawa-Ohnishi M."/>
            <person name="Mori A."/>
            <person name="Matsubayashi Y."/>
        </authorList>
    </citation>
    <scope>FUNCTION</scope>
    <scope>GENE FAMILY</scope>
    <scope>NOMENCLATURE</scope>
</reference>
<reference key="6">
    <citation type="journal article" date="2012" name="Dev. Cell">
        <title>GOLVEN secretory peptides regulate auxin carrier turnover during plant gravitropic responses.</title>
        <authorList>
            <person name="Whitford R."/>
            <person name="Fernandez A."/>
            <person name="Tejos R."/>
            <person name="Perez A.C."/>
            <person name="Kleine-Vehn J."/>
            <person name="Vanneste S."/>
            <person name="Drozdzecki A."/>
            <person name="Leitner J."/>
            <person name="Abas L."/>
            <person name="Aerts M."/>
            <person name="Hoogewijs K."/>
            <person name="Baster P."/>
            <person name="De Groodt R."/>
            <person name="Lin Y.-C."/>
            <person name="Storme V."/>
            <person name="Van de Peer Y."/>
            <person name="Beeckman T."/>
            <person name="Madder A."/>
            <person name="Devreese B."/>
            <person name="Luschnig C."/>
            <person name="Friml J."/>
            <person name="Hilson P."/>
        </authorList>
    </citation>
    <scope>FUNCTION</scope>
    <scope>DISRUPTION PHENOTYPE</scope>
    <scope>TISSUE SPECIFICITY</scope>
    <scope>DEVELOPMENTAL STAGE</scope>
    <scope>IDENTIFICATION BY MASS SPECTROMETRY</scope>
    <scope>HYDROXYLATION AT PRO-80</scope>
    <scope>SULFATION AT TYR-72</scope>
    <scope>INDUCTION BY AUXIN</scope>
</reference>
<reference key="7">
    <citation type="journal article" date="2012" name="Proc. Natl. Acad. Sci. U.S.A.">
        <title>CLE-like (CLEL) peptides control the pattern of root growth and lateral root development in Arabidopsis.</title>
        <authorList>
            <person name="Meng L."/>
            <person name="Buchanan B.B."/>
            <person name="Feldman L.J."/>
            <person name="Luan S."/>
        </authorList>
    </citation>
    <scope>FUNCTION</scope>
    <scope>TISSUE SPECIFICITY</scope>
    <scope>SUBCELLULAR LOCATION</scope>
    <scope>NOMENCLATURE</scope>
    <scope>GENE FAMILY</scope>
    <source>
        <strain>cv. Columbia</strain>
    </source>
</reference>
<reference key="8">
    <citation type="journal article" date="2013" name="Plant Physiol.">
        <title>Transcriptional and functional classification of the GOLVEN/ROOT GROWTH FACTOR/CLE-like signaling peptides reveals their role in lateral root and hair formation.</title>
        <authorList>
            <person name="Fernandez A."/>
            <person name="Drozdzecki A."/>
            <person name="Hoogewijs K."/>
            <person name="Nguyen A."/>
            <person name="Beeckman T."/>
            <person name="Madder A."/>
            <person name="Hilson P."/>
        </authorList>
    </citation>
    <scope>FUNCTION</scope>
    <scope>TISSUE SPECIFICITY</scope>
    <scope>DEVELOPMENTAL STAGE</scope>
    <source>
        <strain>cv. Columbia</strain>
    </source>
</reference>
<sequence>MSCSLRSGLVIVFCFILLLLSSNVGCASAARRLRSHKHHHHKVASLDVFNGGERRRALGGVETGEEVVVMDYPQPHRKPPIHNEKS</sequence>
<comment type="function">
    <molecule>GLV1p</molecule>
    <text evidence="4 5 6 7">Signaling peptide (root growth factor) that regulates the pattern of root growth and lateral root development by modulating the length and the number of cortical cells in the root apical meristem (RAM), and the anticlinal asymmetric cell divisions in lateral root initiation cells (PubMed:22307643, PubMed:23370719). Also involved in the regulation of hypocotyl bending and root gravitropism in a PIN2-traffic dependent manner, thus influencing the formation of auxin gradients (PubMed:22421050). Maintains the postembryonic root stem cell niche (PubMed:20798316).</text>
</comment>
<comment type="subunit">
    <molecule>GLV1p</molecule>
    <text evidence="2">Binds to LRR receptor-like serine/threonine-protein kinases to trigger their dimerization with SERK proteins and subsequent signaling.</text>
</comment>
<comment type="subcellular location">
    <subcellularLocation>
        <location evidence="5">Endoplasmic reticulum</location>
    </subcellularLocation>
    <text evidence="5">The precursor is detected in the endoplasmic reticulum probably during its processing.</text>
</comment>
<comment type="subcellular location">
    <molecule>GLV1p</molecule>
    <subcellularLocation>
        <location evidence="13">Secreted</location>
    </subcellularLocation>
</comment>
<comment type="tissue specificity">
    <text evidence="5 6 7">Expressed in stems, hypocotyls, cotyledons, leaves, flowers, shoot apex, siliques, stamens and petals.</text>
</comment>
<comment type="developmental stage">
    <text evidence="6 7">Absent from the primary root (PubMed:23370719). Expressed irregularly throughout the cotyledon and accumulates at the base of the organ (PubMed:23370719). In leaves, present at a high level in the basal part, close to the main veins, irregularly in the lamina joining these veins, and in separate segments of the leaf margin (PubMed:23370719). Observed in the stem, the rachis of the inflorescence, and the lower portion of the flower pedicel, especially at its upper side (PubMed:23370719). In flowers, detected throughout its development at the base of the sepals, in the petals, the filament of the stamens and the gynoecium, and later in siliques (PubMed:23370719). During seedling gravitropic response, restricted to the epidermis and cortex and enhanced at the lower side of the reoriented hypocotyl (PubMed:22421050).</text>
</comment>
<comment type="induction">
    <text evidence="6">Rapidly induced by auxin.</text>
</comment>
<comment type="disruption phenotype">
    <text evidence="6">Reduced hypocotyl bending and dose-dependent altered root gravitropism associated with an altered PIN2 traffic that impairs the formation of auxin gradients, thus leading to an irregular waves root shape.</text>
</comment>
<comment type="miscellaneous">
    <text evidence="14">'Golven' means irregular waves in Dutch.</text>
</comment>
<comment type="similarity">
    <text evidence="12">Belongs to the RGF family.</text>
</comment>
<proteinExistence type="evidence at protein level"/>
<gene>
    <name evidence="11" type="primary">GLV1</name>
    <name evidence="9" type="synonym">CLEL6</name>
    <name evidence="8" type="synonym">RGF6</name>
    <name evidence="15" type="ordered locus">At4g16515</name>
    <name evidence="16" type="ORF">FCAALL</name>
</gene>
<evidence type="ECO:0000250" key="1">
    <source>
        <dbReference type="UniProtKB" id="Q3E880"/>
    </source>
</evidence>
<evidence type="ECO:0000250" key="2">
    <source>
        <dbReference type="UniProtKB" id="Q9LI64"/>
    </source>
</evidence>
<evidence type="ECO:0000255" key="3"/>
<evidence type="ECO:0000269" key="4">
    <source>
    </source>
</evidence>
<evidence type="ECO:0000269" key="5">
    <source>
    </source>
</evidence>
<evidence type="ECO:0000269" key="6">
    <source>
    </source>
</evidence>
<evidence type="ECO:0000269" key="7">
    <source>
    </source>
</evidence>
<evidence type="ECO:0000303" key="8">
    <source>
    </source>
</evidence>
<evidence type="ECO:0000303" key="9">
    <source>
    </source>
</evidence>
<evidence type="ECO:0000303" key="10">
    <source>
    </source>
</evidence>
<evidence type="ECO:0000303" key="11">
    <source>
    </source>
</evidence>
<evidence type="ECO:0000305" key="12"/>
<evidence type="ECO:0000305" key="13">
    <source>
    </source>
</evidence>
<evidence type="ECO:0000305" key="14">
    <source>
    </source>
</evidence>
<evidence type="ECO:0000312" key="15">
    <source>
        <dbReference type="Araport" id="AT4G16515"/>
    </source>
</evidence>
<evidence type="ECO:0000312" key="16">
    <source>
        <dbReference type="EMBL" id="AL161544"/>
    </source>
</evidence>
<accession>Q93VK8</accession>